<proteinExistence type="evidence at protein level"/>
<name>PGAM1_RAT</name>
<gene>
    <name evidence="6" type="primary">Pgam1</name>
</gene>
<accession>P25113</accession>
<accession>Q6P0K6</accession>
<organism>
    <name type="scientific">Rattus norvegicus</name>
    <name type="common">Rat</name>
    <dbReference type="NCBI Taxonomy" id="10116"/>
    <lineage>
        <taxon>Eukaryota</taxon>
        <taxon>Metazoa</taxon>
        <taxon>Chordata</taxon>
        <taxon>Craniata</taxon>
        <taxon>Vertebrata</taxon>
        <taxon>Euteleostomi</taxon>
        <taxon>Mammalia</taxon>
        <taxon>Eutheria</taxon>
        <taxon>Euarchontoglires</taxon>
        <taxon>Glires</taxon>
        <taxon>Rodentia</taxon>
        <taxon>Myomorpha</taxon>
        <taxon>Muroidea</taxon>
        <taxon>Muridae</taxon>
        <taxon>Murinae</taxon>
        <taxon>Rattus</taxon>
    </lineage>
</organism>
<protein>
    <recommendedName>
        <fullName evidence="5">Phosphoglycerate mutase 1</fullName>
        <ecNumber evidence="3">5.4.2.11</ecNumber>
        <ecNumber evidence="3">5.4.2.4</ecNumber>
    </recommendedName>
    <alternativeName>
        <fullName>BPG-dependent PGAM 1</fullName>
    </alternativeName>
    <alternativeName>
        <fullName>Phosphoglycerate mutase isozyme B</fullName>
        <shortName>PGAM-B</shortName>
    </alternativeName>
</protein>
<keyword id="KW-0007">Acetylation</keyword>
<keyword id="KW-0903">Direct protein sequencing</keyword>
<keyword id="KW-0324">Glycolysis</keyword>
<keyword id="KW-0378">Hydrolase</keyword>
<keyword id="KW-0413">Isomerase</keyword>
<keyword id="KW-0597">Phosphoprotein</keyword>
<keyword id="KW-1185">Reference proteome</keyword>
<comment type="function">
    <text evidence="3">Catalyzes the interconversion of 2-phosphoglycerate and 3-phosphoglyceratea crucial step in glycolysis, by using 2,3-bisphosphoglycerate. Also catalyzes the interconversion of (2R)-2,3-bisphosphoglycerate and (2R)-3-phospho-glyceroyl phosphate.</text>
</comment>
<comment type="catalytic activity">
    <reaction evidence="3">
        <text>(2R)-2-phosphoglycerate = (2R)-3-phosphoglycerate</text>
        <dbReference type="Rhea" id="RHEA:15901"/>
        <dbReference type="ChEBI" id="CHEBI:58272"/>
        <dbReference type="ChEBI" id="CHEBI:58289"/>
        <dbReference type="EC" id="5.4.2.11"/>
    </reaction>
    <physiologicalReaction direction="right-to-left" evidence="3">
        <dbReference type="Rhea" id="RHEA:15903"/>
    </physiologicalReaction>
</comment>
<comment type="catalytic activity">
    <reaction evidence="3">
        <text>(2R)-3-phospho-glyceroyl phosphate = (2R)-2,3-bisphosphoglycerate + H(+)</text>
        <dbReference type="Rhea" id="RHEA:17765"/>
        <dbReference type="ChEBI" id="CHEBI:15378"/>
        <dbReference type="ChEBI" id="CHEBI:57604"/>
        <dbReference type="ChEBI" id="CHEBI:58248"/>
        <dbReference type="EC" id="5.4.2.4"/>
    </reaction>
</comment>
<comment type="subunit">
    <text evidence="3">Homodimer.</text>
</comment>
<comment type="PTM">
    <text evidence="1">Acetylated at Lys-253, Lys-253 and Lys-254 under high glucose condition. Acetylation increases catalytic activity. Under glucose restriction SIRT1 levels dramatically increase and it deacetylates the enzyme (By similarity).</text>
</comment>
<comment type="similarity">
    <text evidence="5">Belongs to the phosphoglycerate mutase family. BPG-dependent PGAM subfamily.</text>
</comment>
<feature type="chain" id="PRO_0000179828" description="Phosphoglycerate mutase 1">
    <location>
        <begin position="1"/>
        <end position="254"/>
    </location>
</feature>
<feature type="active site" description="Tele-phosphohistidine intermediate" evidence="3">
    <location>
        <position position="11"/>
    </location>
</feature>
<feature type="active site" description="Proton donor/acceptor" evidence="3">
    <location>
        <position position="89"/>
    </location>
</feature>
<feature type="binding site" evidence="2">
    <location>
        <begin position="10"/>
        <end position="17"/>
    </location>
    <ligand>
        <name>substrate</name>
    </ligand>
</feature>
<feature type="binding site" evidence="2">
    <location>
        <begin position="23"/>
        <end position="24"/>
    </location>
    <ligand>
        <name>substrate</name>
    </ligand>
</feature>
<feature type="binding site" evidence="2">
    <location>
        <position position="62"/>
    </location>
    <ligand>
        <name>substrate</name>
    </ligand>
</feature>
<feature type="binding site" evidence="2">
    <location>
        <begin position="89"/>
        <end position="92"/>
    </location>
    <ligand>
        <name>substrate</name>
    </ligand>
</feature>
<feature type="binding site" evidence="2">
    <location>
        <position position="100"/>
    </location>
    <ligand>
        <name>substrate</name>
    </ligand>
</feature>
<feature type="binding site" evidence="2">
    <location>
        <begin position="116"/>
        <end position="117"/>
    </location>
    <ligand>
        <name>substrate</name>
    </ligand>
</feature>
<feature type="binding site" evidence="2">
    <location>
        <begin position="187"/>
        <end position="188"/>
    </location>
    <ligand>
        <name>substrate</name>
    </ligand>
</feature>
<feature type="site" description="Transition state stabilizer" evidence="2">
    <location>
        <position position="186"/>
    </location>
</feature>
<feature type="modified residue" description="Phosphoserine" evidence="7 8">
    <location>
        <position position="14"/>
    </location>
</feature>
<feature type="modified residue" description="Phosphoserine" evidence="8">
    <location>
        <position position="23"/>
    </location>
</feature>
<feature type="modified residue" description="Phosphotyrosine" evidence="8">
    <location>
        <position position="26"/>
    </location>
</feature>
<feature type="modified residue" description="Phosphoserine" evidence="3">
    <location>
        <position position="31"/>
    </location>
</feature>
<feature type="modified residue" description="N6-acetyllysine" evidence="4">
    <location>
        <position position="106"/>
    </location>
</feature>
<feature type="modified residue" description="Phosphoserine" evidence="8">
    <location>
        <position position="118"/>
    </location>
</feature>
<feature type="modified residue" description="N6-acetyllysine; alternate" evidence="3">
    <location>
        <position position="251"/>
    </location>
</feature>
<feature type="modified residue" description="N6-succinyllysine; alternate" evidence="4">
    <location>
        <position position="251"/>
    </location>
</feature>
<feature type="modified residue" description="N6-acetyllysine" evidence="3">
    <location>
        <position position="253"/>
    </location>
</feature>
<feature type="modified residue" description="N6-acetyllysine" evidence="3">
    <location>
        <position position="254"/>
    </location>
</feature>
<feature type="sequence conflict" description="In Ref. 1; AAA41834." evidence="5" ref="1">
    <original>C</original>
    <variation>V</variation>
    <location>
        <position position="55"/>
    </location>
</feature>
<feature type="sequence conflict" description="In Ref. 2; AAB19888." evidence="5" ref="2">
    <original>N</original>
    <variation>K</variation>
    <location>
        <position position="99"/>
    </location>
</feature>
<feature type="sequence conflict" description="In Ref. 1; AAA41834." evidence="5" ref="1">
    <original>R</original>
    <variation>G</variation>
    <location>
        <position position="180"/>
    </location>
</feature>
<feature type="sequence conflict" description="In Ref. 1; AAA41834." evidence="5" ref="1">
    <original>A</original>
    <variation>P</variation>
    <location>
        <position position="184"/>
    </location>
</feature>
<feature type="sequence conflict" description="In Ref. 1; AAA41834." evidence="5" ref="1">
    <original>LR</original>
    <variation>YG</variation>
    <location>
        <begin position="190"/>
        <end position="191"/>
    </location>
</feature>
<feature type="sequence conflict" description="In Ref. 1; AAA41834." evidence="5" ref="1">
    <original>F</original>
    <variation>S</variation>
    <location>
        <position position="232"/>
    </location>
</feature>
<reference key="1">
    <citation type="journal article" date="1992" name="Gene">
        <title>Isolation and sequencing of a cDNA encoding the B isozyme of rat phosphoglycerate mutase.</title>
        <authorList>
            <person name="Urena J.M."/>
            <person name="Grana X."/>
            <person name="de Lecea L."/>
            <person name="Ruiz P."/>
            <person name="Castella J."/>
            <person name="Carreras J."/>
            <person name="Pons G."/>
            <person name="Climent F."/>
        </authorList>
    </citation>
    <scope>NUCLEOTIDE SEQUENCE [MRNA]</scope>
</reference>
<reference key="2">
    <citation type="journal article" date="1991" name="Arch. Biochem. Biophys.">
        <title>cDNA encoding type B subunit of rat phosphoglycerate mutase: its isolation and nucleotide sequence.</title>
        <authorList>
            <person name="Uchida K."/>
        </authorList>
    </citation>
    <scope>NUCLEOTIDE SEQUENCE [MRNA]</scope>
    <source>
        <tissue>Liver</tissue>
    </source>
</reference>
<reference key="3">
    <citation type="journal article" date="2004" name="Genome Res.">
        <title>The status, quality, and expansion of the NIH full-length cDNA project: the Mammalian Gene Collection (MGC).</title>
        <authorList>
            <consortium name="The MGC Project Team"/>
        </authorList>
    </citation>
    <scope>NUCLEOTIDE SEQUENCE [LARGE SCALE MRNA]</scope>
    <source>
        <tissue>Prostate</tissue>
    </source>
</reference>
<reference key="4">
    <citation type="submission" date="2007-04" db="UniProtKB">
        <authorList>
            <person name="Lubec G."/>
            <person name="Diao W."/>
            <person name="Afjehi-Sadat L."/>
            <person name="Chen W.-Q."/>
        </authorList>
    </citation>
    <scope>PROTEIN SEQUENCE OF 11-39; 47-62; 163-176 AND 222-240</scope>
    <scope>IDENTIFICATION BY MASS SPECTROMETRY</scope>
    <source>
        <strain>Sprague-Dawley</strain>
        <tissue>Hippocampus</tissue>
        <tissue>Spinal cord</tissue>
    </source>
</reference>
<reference key="5">
    <citation type="journal article" date="2006" name="Proc. Natl. Acad. Sci. U.S.A.">
        <title>Quantitative phosphoproteomics of vasopressin-sensitive renal cells: regulation of aquaporin-2 phosphorylation at two sites.</title>
        <authorList>
            <person name="Hoffert J.D."/>
            <person name="Pisitkun T."/>
            <person name="Wang G."/>
            <person name="Shen R.-F."/>
            <person name="Knepper M.A."/>
        </authorList>
    </citation>
    <scope>PHOSPHORYLATION [LARGE SCALE ANALYSIS] AT SER-14</scope>
    <scope>IDENTIFICATION BY MASS SPECTROMETRY [LARGE SCALE ANALYSIS]</scope>
</reference>
<reference key="6">
    <citation type="journal article" date="2012" name="Nat. Commun.">
        <title>Quantitative maps of protein phosphorylation sites across 14 different rat organs and tissues.</title>
        <authorList>
            <person name="Lundby A."/>
            <person name="Secher A."/>
            <person name="Lage K."/>
            <person name="Nordsborg N.B."/>
            <person name="Dmytriyev A."/>
            <person name="Lundby C."/>
            <person name="Olsen J.V."/>
        </authorList>
    </citation>
    <scope>PHOSPHORYLATION [LARGE SCALE ANALYSIS] AT SER-14; SER-23; TYR-26 AND SER-118</scope>
    <scope>IDENTIFICATION BY MASS SPECTROMETRY [LARGE SCALE ANALYSIS]</scope>
</reference>
<evidence type="ECO:0000250" key="1"/>
<evidence type="ECO:0000250" key="2">
    <source>
        <dbReference type="UniProtKB" id="P00950"/>
    </source>
</evidence>
<evidence type="ECO:0000250" key="3">
    <source>
        <dbReference type="UniProtKB" id="P18669"/>
    </source>
</evidence>
<evidence type="ECO:0000250" key="4">
    <source>
        <dbReference type="UniProtKB" id="Q9DBJ1"/>
    </source>
</evidence>
<evidence type="ECO:0000305" key="5"/>
<evidence type="ECO:0000312" key="6">
    <source>
        <dbReference type="RGD" id="3312"/>
    </source>
</evidence>
<evidence type="ECO:0007744" key="7">
    <source>
    </source>
</evidence>
<evidence type="ECO:0007744" key="8">
    <source>
    </source>
</evidence>
<dbReference type="EC" id="5.4.2.11" evidence="3"/>
<dbReference type="EC" id="5.4.2.4" evidence="3"/>
<dbReference type="EMBL" id="M76591">
    <property type="protein sequence ID" value="AAA41834.1"/>
    <property type="molecule type" value="mRNA"/>
</dbReference>
<dbReference type="EMBL" id="S63233">
    <property type="protein sequence ID" value="AAB19888.2"/>
    <property type="molecule type" value="mRNA"/>
</dbReference>
<dbReference type="EMBL" id="BC065582">
    <property type="protein sequence ID" value="AAH65582.1"/>
    <property type="molecule type" value="mRNA"/>
</dbReference>
<dbReference type="RefSeq" id="NP_445742.2">
    <property type="nucleotide sequence ID" value="NM_053290.4"/>
</dbReference>
<dbReference type="SMR" id="P25113"/>
<dbReference type="BioGRID" id="246778">
    <property type="interactions" value="3"/>
</dbReference>
<dbReference type="FunCoup" id="P25113">
    <property type="interactions" value="2031"/>
</dbReference>
<dbReference type="IntAct" id="P25113">
    <property type="interactions" value="1"/>
</dbReference>
<dbReference type="STRING" id="10116.ENSRNOP00000065690"/>
<dbReference type="CarbonylDB" id="P25113"/>
<dbReference type="GlyGen" id="P25113">
    <property type="glycosylation" value="1 site, 1 O-linked glycan (1 site)"/>
</dbReference>
<dbReference type="iPTMnet" id="P25113"/>
<dbReference type="PhosphoSitePlus" id="P25113"/>
<dbReference type="SwissPalm" id="P25113"/>
<dbReference type="jPOST" id="P25113"/>
<dbReference type="PaxDb" id="10116-ENSRNOP00000065690"/>
<dbReference type="Ensembl" id="ENSRNOT00000071965.3">
    <property type="protein sequence ID" value="ENSRNOP00000065690.1"/>
    <property type="gene ID" value="ENSRNOG00000050585.3"/>
</dbReference>
<dbReference type="GeneID" id="24642"/>
<dbReference type="KEGG" id="rno:24642"/>
<dbReference type="AGR" id="RGD:3312"/>
<dbReference type="CTD" id="5223"/>
<dbReference type="RGD" id="3312">
    <property type="gene designation" value="Pgam1"/>
</dbReference>
<dbReference type="eggNOG" id="KOG0235">
    <property type="taxonomic scope" value="Eukaryota"/>
</dbReference>
<dbReference type="GeneTree" id="ENSGT00950000182926"/>
<dbReference type="HOGENOM" id="CLU_033323_1_1_1"/>
<dbReference type="InParanoid" id="P25113"/>
<dbReference type="OMA" id="MLPYWYD"/>
<dbReference type="OrthoDB" id="354304at2759"/>
<dbReference type="PhylomeDB" id="P25113"/>
<dbReference type="Reactome" id="R-RNO-6798695">
    <property type="pathway name" value="Neutrophil degranulation"/>
</dbReference>
<dbReference type="Reactome" id="R-RNO-70171">
    <property type="pathway name" value="Glycolysis"/>
</dbReference>
<dbReference type="Reactome" id="R-RNO-70263">
    <property type="pathway name" value="Gluconeogenesis"/>
</dbReference>
<dbReference type="PRO" id="PR:P25113"/>
<dbReference type="Proteomes" id="UP000002494">
    <property type="component" value="Chromosome 1"/>
</dbReference>
<dbReference type="Bgee" id="ENSRNOG00000050585">
    <property type="expression patterns" value="Expressed in Ammon's horn and 20 other cell types or tissues"/>
</dbReference>
<dbReference type="GO" id="GO:0005737">
    <property type="term" value="C:cytoplasm"/>
    <property type="evidence" value="ECO:0000266"/>
    <property type="project" value="RGD"/>
</dbReference>
<dbReference type="GO" id="GO:0005829">
    <property type="term" value="C:cytosol"/>
    <property type="evidence" value="ECO:0000266"/>
    <property type="project" value="RGD"/>
</dbReference>
<dbReference type="GO" id="GO:0004082">
    <property type="term" value="F:bisphosphoglycerate mutase activity"/>
    <property type="evidence" value="ECO:0000250"/>
    <property type="project" value="UniProtKB"/>
</dbReference>
<dbReference type="GO" id="GO:0016787">
    <property type="term" value="F:hydrolase activity"/>
    <property type="evidence" value="ECO:0007669"/>
    <property type="project" value="UniProtKB-KW"/>
</dbReference>
<dbReference type="GO" id="GO:0004619">
    <property type="term" value="F:phosphoglycerate mutase activity"/>
    <property type="evidence" value="ECO:0000314"/>
    <property type="project" value="RGD"/>
</dbReference>
<dbReference type="GO" id="GO:0019901">
    <property type="term" value="F:protein kinase binding"/>
    <property type="evidence" value="ECO:0000266"/>
    <property type="project" value="RGD"/>
</dbReference>
<dbReference type="GO" id="GO:0061621">
    <property type="term" value="P:canonical glycolysis"/>
    <property type="evidence" value="ECO:0000266"/>
    <property type="project" value="RGD"/>
</dbReference>
<dbReference type="GO" id="GO:0006094">
    <property type="term" value="P:gluconeogenesis"/>
    <property type="evidence" value="ECO:0000266"/>
    <property type="project" value="RGD"/>
</dbReference>
<dbReference type="CDD" id="cd07067">
    <property type="entry name" value="HP_PGM_like"/>
    <property type="match status" value="1"/>
</dbReference>
<dbReference type="FunFam" id="3.40.50.1240:FF:000007">
    <property type="entry name" value="Phosphoglycerate mutase"/>
    <property type="match status" value="1"/>
</dbReference>
<dbReference type="Gene3D" id="3.40.50.1240">
    <property type="entry name" value="Phosphoglycerate mutase-like"/>
    <property type="match status" value="1"/>
</dbReference>
<dbReference type="HAMAP" id="MF_01039">
    <property type="entry name" value="PGAM_GpmA"/>
    <property type="match status" value="1"/>
</dbReference>
<dbReference type="InterPro" id="IPR013078">
    <property type="entry name" value="His_Pase_superF_clade-1"/>
</dbReference>
<dbReference type="InterPro" id="IPR029033">
    <property type="entry name" value="His_PPase_superfam"/>
</dbReference>
<dbReference type="InterPro" id="IPR001345">
    <property type="entry name" value="PG/BPGM_mutase_AS"/>
</dbReference>
<dbReference type="InterPro" id="IPR005952">
    <property type="entry name" value="Phosphogly_mut1"/>
</dbReference>
<dbReference type="NCBIfam" id="TIGR01258">
    <property type="entry name" value="pgm_1"/>
    <property type="match status" value="1"/>
</dbReference>
<dbReference type="NCBIfam" id="NF010713">
    <property type="entry name" value="PRK14115.1"/>
    <property type="match status" value="1"/>
</dbReference>
<dbReference type="PANTHER" id="PTHR11931">
    <property type="entry name" value="PHOSPHOGLYCERATE MUTASE"/>
    <property type="match status" value="1"/>
</dbReference>
<dbReference type="Pfam" id="PF00300">
    <property type="entry name" value="His_Phos_1"/>
    <property type="match status" value="2"/>
</dbReference>
<dbReference type="PIRSF" id="PIRSF000709">
    <property type="entry name" value="6PFK_2-Ptase"/>
    <property type="match status" value="1"/>
</dbReference>
<dbReference type="SMART" id="SM00855">
    <property type="entry name" value="PGAM"/>
    <property type="match status" value="1"/>
</dbReference>
<dbReference type="SUPFAM" id="SSF53254">
    <property type="entry name" value="Phosphoglycerate mutase-like"/>
    <property type="match status" value="1"/>
</dbReference>
<dbReference type="PROSITE" id="PS00175">
    <property type="entry name" value="PG_MUTASE"/>
    <property type="match status" value="1"/>
</dbReference>
<sequence length="254" mass="28832">MAAYKLVLIRHGESAWNLENRFSGWYDADLSPAGHEEAKRGGQALRDAGYEFDICFTSVQKRAIRTLWTVLDAIDQMWLPVVRTWRLNERHYGGLTGLNKAETAAKHGEAQVKIWRRSYDVPPPPMEPDHPFYSNISKDRRYADLTEDQLPSCESLKDTIARALPFWNEEIVPQIKEGKRVLIAAHGNSLRGIVKHLEGLSEEAIMELNLPTGIPIVYELDKNLKPIKPMQFLGDEETVRKAMEAVAAQGKVKK</sequence>